<keyword id="KW-0131">Cell cycle</keyword>
<keyword id="KW-0132">Cell division</keyword>
<keyword id="KW-0159">Chromosome partition</keyword>
<keyword id="KW-0963">Cytoplasm</keyword>
<keyword id="KW-0229">DNA integration</keyword>
<keyword id="KW-0233">DNA recombination</keyword>
<keyword id="KW-0238">DNA-binding</keyword>
<dbReference type="EMBL" id="CP000381">
    <property type="protein sequence ID" value="ABX72560.1"/>
    <property type="molecule type" value="Genomic_DNA"/>
</dbReference>
<dbReference type="RefSeq" id="WP_002243046.1">
    <property type="nucleotide sequence ID" value="NC_010120.1"/>
</dbReference>
<dbReference type="SMR" id="A9M1G2"/>
<dbReference type="KEGG" id="nmn:NMCC_0353"/>
<dbReference type="HOGENOM" id="CLU_027562_9_0_4"/>
<dbReference type="Proteomes" id="UP000001177">
    <property type="component" value="Chromosome"/>
</dbReference>
<dbReference type="GO" id="GO:0005737">
    <property type="term" value="C:cytoplasm"/>
    <property type="evidence" value="ECO:0007669"/>
    <property type="project" value="UniProtKB-SubCell"/>
</dbReference>
<dbReference type="GO" id="GO:0003677">
    <property type="term" value="F:DNA binding"/>
    <property type="evidence" value="ECO:0007669"/>
    <property type="project" value="UniProtKB-KW"/>
</dbReference>
<dbReference type="GO" id="GO:0009037">
    <property type="term" value="F:tyrosine-based site-specific recombinase activity"/>
    <property type="evidence" value="ECO:0007669"/>
    <property type="project" value="UniProtKB-UniRule"/>
</dbReference>
<dbReference type="GO" id="GO:0051301">
    <property type="term" value="P:cell division"/>
    <property type="evidence" value="ECO:0007669"/>
    <property type="project" value="UniProtKB-KW"/>
</dbReference>
<dbReference type="GO" id="GO:0007059">
    <property type="term" value="P:chromosome segregation"/>
    <property type="evidence" value="ECO:0007669"/>
    <property type="project" value="UniProtKB-UniRule"/>
</dbReference>
<dbReference type="GO" id="GO:0006313">
    <property type="term" value="P:DNA transposition"/>
    <property type="evidence" value="ECO:0007669"/>
    <property type="project" value="UniProtKB-UniRule"/>
</dbReference>
<dbReference type="CDD" id="cd00798">
    <property type="entry name" value="INT_XerDC_C"/>
    <property type="match status" value="1"/>
</dbReference>
<dbReference type="Gene3D" id="1.10.150.130">
    <property type="match status" value="1"/>
</dbReference>
<dbReference type="Gene3D" id="1.10.443.10">
    <property type="entry name" value="Intergrase catalytic core"/>
    <property type="match status" value="1"/>
</dbReference>
<dbReference type="HAMAP" id="MF_01808">
    <property type="entry name" value="Recomb_XerC_XerD"/>
    <property type="match status" value="1"/>
</dbReference>
<dbReference type="InterPro" id="IPR044068">
    <property type="entry name" value="CB"/>
</dbReference>
<dbReference type="InterPro" id="IPR011010">
    <property type="entry name" value="DNA_brk_join_enz"/>
</dbReference>
<dbReference type="InterPro" id="IPR013762">
    <property type="entry name" value="Integrase-like_cat_sf"/>
</dbReference>
<dbReference type="InterPro" id="IPR002104">
    <property type="entry name" value="Integrase_catalytic"/>
</dbReference>
<dbReference type="InterPro" id="IPR010998">
    <property type="entry name" value="Integrase_recombinase_N"/>
</dbReference>
<dbReference type="InterPro" id="IPR004107">
    <property type="entry name" value="Integrase_SAM-like_N"/>
</dbReference>
<dbReference type="InterPro" id="IPR011931">
    <property type="entry name" value="Recomb_XerC"/>
</dbReference>
<dbReference type="InterPro" id="IPR023009">
    <property type="entry name" value="Tyrosine_recombinase_XerC/XerD"/>
</dbReference>
<dbReference type="InterPro" id="IPR050090">
    <property type="entry name" value="Tyrosine_recombinase_XerCD"/>
</dbReference>
<dbReference type="NCBIfam" id="TIGR02224">
    <property type="entry name" value="recomb_XerC"/>
    <property type="match status" value="1"/>
</dbReference>
<dbReference type="PANTHER" id="PTHR30349">
    <property type="entry name" value="PHAGE INTEGRASE-RELATED"/>
    <property type="match status" value="1"/>
</dbReference>
<dbReference type="PANTHER" id="PTHR30349:SF81">
    <property type="entry name" value="TYROSINE RECOMBINASE XERC"/>
    <property type="match status" value="1"/>
</dbReference>
<dbReference type="Pfam" id="PF02899">
    <property type="entry name" value="Phage_int_SAM_1"/>
    <property type="match status" value="1"/>
</dbReference>
<dbReference type="Pfam" id="PF00589">
    <property type="entry name" value="Phage_integrase"/>
    <property type="match status" value="1"/>
</dbReference>
<dbReference type="SUPFAM" id="SSF56349">
    <property type="entry name" value="DNA breaking-rejoining enzymes"/>
    <property type="match status" value="1"/>
</dbReference>
<dbReference type="PROSITE" id="PS51900">
    <property type="entry name" value="CB"/>
    <property type="match status" value="1"/>
</dbReference>
<dbReference type="PROSITE" id="PS51898">
    <property type="entry name" value="TYR_RECOMBINASE"/>
    <property type="match status" value="1"/>
</dbReference>
<protein>
    <recommendedName>
        <fullName evidence="1">Tyrosine recombinase XerC</fullName>
    </recommendedName>
</protein>
<name>XERC_NEIM0</name>
<comment type="function">
    <text evidence="1">Site-specific tyrosine recombinase, which acts by catalyzing the cutting and rejoining of the recombining DNA molecules. The XerC-XerD complex is essential to convert dimers of the bacterial chromosome into monomers to permit their segregation at cell division. It also contributes to the segregational stability of plasmids.</text>
</comment>
<comment type="subunit">
    <text evidence="1">Forms a cyclic heterotetrameric complex composed of two molecules of XerC and two molecules of XerD.</text>
</comment>
<comment type="subcellular location">
    <subcellularLocation>
        <location evidence="1">Cytoplasm</location>
    </subcellularLocation>
</comment>
<comment type="similarity">
    <text evidence="1">Belongs to the 'phage' integrase family. XerC subfamily.</text>
</comment>
<reference key="1">
    <citation type="journal article" date="2008" name="Genomics">
        <title>Characterization of ST-4821 complex, a unique Neisseria meningitidis clone.</title>
        <authorList>
            <person name="Peng J."/>
            <person name="Yang L."/>
            <person name="Yang F."/>
            <person name="Yang J."/>
            <person name="Yan Y."/>
            <person name="Nie H."/>
            <person name="Zhang X."/>
            <person name="Xiong Z."/>
            <person name="Jiang Y."/>
            <person name="Cheng F."/>
            <person name="Xu X."/>
            <person name="Chen S."/>
            <person name="Sun L."/>
            <person name="Li W."/>
            <person name="Shen Y."/>
            <person name="Shao Z."/>
            <person name="Liang X."/>
            <person name="Xu J."/>
            <person name="Jin Q."/>
        </authorList>
    </citation>
    <scope>NUCLEOTIDE SEQUENCE [LARGE SCALE GENOMIC DNA]</scope>
    <source>
        <strain>053442</strain>
    </source>
</reference>
<accession>A9M1G2</accession>
<evidence type="ECO:0000255" key="1">
    <source>
        <dbReference type="HAMAP-Rule" id="MF_01808"/>
    </source>
</evidence>
<evidence type="ECO:0000255" key="2">
    <source>
        <dbReference type="PROSITE-ProRule" id="PRU01246"/>
    </source>
</evidence>
<evidence type="ECO:0000255" key="3">
    <source>
        <dbReference type="PROSITE-ProRule" id="PRU01248"/>
    </source>
</evidence>
<gene>
    <name evidence="1" type="primary">xerC</name>
    <name type="ordered locus">NMCC_0353</name>
</gene>
<organism>
    <name type="scientific">Neisseria meningitidis serogroup C (strain 053442)</name>
    <dbReference type="NCBI Taxonomy" id="374833"/>
    <lineage>
        <taxon>Bacteria</taxon>
        <taxon>Pseudomonadati</taxon>
        <taxon>Pseudomonadota</taxon>
        <taxon>Betaproteobacteria</taxon>
        <taxon>Neisseriales</taxon>
        <taxon>Neisseriaceae</taxon>
        <taxon>Neisseria</taxon>
    </lineage>
</organism>
<sequence>MVLDGFAAHFDAYLENIVREGKSEHTVAAYRRDLEELFALLAQMPSEAEGGVPQGLSRRDFTAALRRLSQRGLNARTLARKLSSWRQYCVWLVERGLLHTDPTADIKPPKQPERVPKALPQEWLNRMLDLPVDGGDPLAVRDHALFELMYGSGLRVSEIHGLNADDVYLDEAWVHVTGKGRKQRQVPLTGKSVEALKNYLPLRQTASDGKALFTGRNGTRLSQRQIQKRLAQWAAQNGDGRHVSPHMMRHSYAGHLLQASRDIRAVQELLGHSSLSTTQIYTKLDFDHIARLYDEAHPRAKRQDE</sequence>
<proteinExistence type="inferred from homology"/>
<feature type="chain" id="PRO_1000088240" description="Tyrosine recombinase XerC">
    <location>
        <begin position="1"/>
        <end position="305"/>
    </location>
</feature>
<feature type="domain" description="Core-binding (CB)" evidence="3">
    <location>
        <begin position="1"/>
        <end position="93"/>
    </location>
</feature>
<feature type="domain" description="Tyr recombinase" evidence="2">
    <location>
        <begin position="114"/>
        <end position="294"/>
    </location>
</feature>
<feature type="active site" evidence="1">
    <location>
        <position position="155"/>
    </location>
</feature>
<feature type="active site" evidence="1">
    <location>
        <position position="179"/>
    </location>
</feature>
<feature type="active site" evidence="1">
    <location>
        <position position="246"/>
    </location>
</feature>
<feature type="active site" evidence="1">
    <location>
        <position position="249"/>
    </location>
</feature>
<feature type="active site" evidence="1">
    <location>
        <position position="272"/>
    </location>
</feature>
<feature type="active site" description="O-(3'-phospho-DNA)-tyrosine intermediate" evidence="1">
    <location>
        <position position="281"/>
    </location>
</feature>